<sequence length="279" mass="30409">MRLGAHLSIAKGLPRTAAMATSIGANTFQYFTRNPRGGAARQIPGKEIQAWREARRRADLYPIAGHLPYTVNLGAAAERQQEFTRMVLHDDTLRVAAIDGEYLISHPGHYEGERQAGLDRIIQLIEEAYLSITPPGPMLLLETMAGQGKEVGTIDDLCYILEGLGWPDRVGVCLDSAHLFAAGWDLRTPAGCQQLVQELAAKIGLDRVKAMHLNDSAAPLGSHRDRHAGIGKGELGREGIAAVVNDPFLGELPLFLETPVANYEEYGEEIALIQKLKSV</sequence>
<comment type="function">
    <text evidence="1">Endonuclease IV plays a role in DNA repair. It cleaves phosphodiester bonds at apurinic or apyrimidinic (AP) sites, generating a 3'-hydroxyl group and a 5'-terminal sugar phosphate.</text>
</comment>
<comment type="catalytic activity">
    <reaction evidence="1">
        <text>Endonucleolytic cleavage to 5'-phosphooligonucleotide end-products.</text>
        <dbReference type="EC" id="3.1.21.2"/>
    </reaction>
</comment>
<comment type="cofactor">
    <cofactor evidence="1">
        <name>Zn(2+)</name>
        <dbReference type="ChEBI" id="CHEBI:29105"/>
    </cofactor>
    <text evidence="1">Binds 3 Zn(2+) ions.</text>
</comment>
<comment type="similarity">
    <text evidence="1">Belongs to the AP endonuclease 2 family.</text>
</comment>
<feature type="chain" id="PRO_1000011317" description="Probable endonuclease 4">
    <location>
        <begin position="1"/>
        <end position="279"/>
    </location>
</feature>
<feature type="binding site" evidence="1">
    <location>
        <position position="66"/>
    </location>
    <ligand>
        <name>Zn(2+)</name>
        <dbReference type="ChEBI" id="CHEBI:29105"/>
        <label>1</label>
    </ligand>
</feature>
<feature type="binding site" evidence="1">
    <location>
        <position position="106"/>
    </location>
    <ligand>
        <name>Zn(2+)</name>
        <dbReference type="ChEBI" id="CHEBI:29105"/>
        <label>1</label>
    </ligand>
</feature>
<feature type="binding site" evidence="1">
    <location>
        <position position="142"/>
    </location>
    <ligand>
        <name>Zn(2+)</name>
        <dbReference type="ChEBI" id="CHEBI:29105"/>
        <label>1</label>
    </ligand>
</feature>
<feature type="binding site" evidence="1">
    <location>
        <position position="142"/>
    </location>
    <ligand>
        <name>Zn(2+)</name>
        <dbReference type="ChEBI" id="CHEBI:29105"/>
        <label>2</label>
    </ligand>
</feature>
<feature type="binding site" evidence="1">
    <location>
        <position position="175"/>
    </location>
    <ligand>
        <name>Zn(2+)</name>
        <dbReference type="ChEBI" id="CHEBI:29105"/>
        <label>2</label>
    </ligand>
</feature>
<feature type="binding site" evidence="1">
    <location>
        <position position="178"/>
    </location>
    <ligand>
        <name>Zn(2+)</name>
        <dbReference type="ChEBI" id="CHEBI:29105"/>
        <label>3</label>
    </ligand>
</feature>
<feature type="binding site" evidence="1">
    <location>
        <position position="212"/>
    </location>
    <ligand>
        <name>Zn(2+)</name>
        <dbReference type="ChEBI" id="CHEBI:29105"/>
        <label>2</label>
    </ligand>
</feature>
<feature type="binding site" evidence="1">
    <location>
        <position position="225"/>
    </location>
    <ligand>
        <name>Zn(2+)</name>
        <dbReference type="ChEBI" id="CHEBI:29105"/>
        <label>3</label>
    </ligand>
</feature>
<feature type="binding site" evidence="1">
    <location>
        <position position="227"/>
    </location>
    <ligand>
        <name>Zn(2+)</name>
        <dbReference type="ChEBI" id="CHEBI:29105"/>
        <label>3</label>
    </ligand>
</feature>
<feature type="binding site" evidence="1">
    <location>
        <position position="257"/>
    </location>
    <ligand>
        <name>Zn(2+)</name>
        <dbReference type="ChEBI" id="CHEBI:29105"/>
        <label>2</label>
    </ligand>
</feature>
<organism>
    <name type="scientific">Moorella thermoacetica (strain ATCC 39073 / JCM 9320)</name>
    <dbReference type="NCBI Taxonomy" id="264732"/>
    <lineage>
        <taxon>Bacteria</taxon>
        <taxon>Bacillati</taxon>
        <taxon>Bacillota</taxon>
        <taxon>Clostridia</taxon>
        <taxon>Moorellales</taxon>
        <taxon>Moorellaceae</taxon>
        <taxon>Moorella</taxon>
    </lineage>
</organism>
<accession>Q2RJF1</accession>
<evidence type="ECO:0000255" key="1">
    <source>
        <dbReference type="HAMAP-Rule" id="MF_00152"/>
    </source>
</evidence>
<protein>
    <recommendedName>
        <fullName evidence="1">Probable endonuclease 4</fullName>
        <ecNumber evidence="1">3.1.21.2</ecNumber>
    </recommendedName>
    <alternativeName>
        <fullName evidence="1">Endodeoxyribonuclease IV</fullName>
    </alternativeName>
    <alternativeName>
        <fullName evidence="1">Endonuclease IV</fullName>
    </alternativeName>
</protein>
<keyword id="KW-0227">DNA damage</keyword>
<keyword id="KW-0234">DNA repair</keyword>
<keyword id="KW-0255">Endonuclease</keyword>
<keyword id="KW-0378">Hydrolase</keyword>
<keyword id="KW-0479">Metal-binding</keyword>
<keyword id="KW-0540">Nuclease</keyword>
<keyword id="KW-0862">Zinc</keyword>
<dbReference type="EC" id="3.1.21.2" evidence="1"/>
<dbReference type="EMBL" id="CP000232">
    <property type="protein sequence ID" value="ABC19438.1"/>
    <property type="molecule type" value="Genomic_DNA"/>
</dbReference>
<dbReference type="RefSeq" id="YP_429981.1">
    <property type="nucleotide sequence ID" value="NC_007644.1"/>
</dbReference>
<dbReference type="SMR" id="Q2RJF1"/>
<dbReference type="STRING" id="264732.Moth_1124"/>
<dbReference type="EnsemblBacteria" id="ABC19438">
    <property type="protein sequence ID" value="ABC19438"/>
    <property type="gene ID" value="Moth_1124"/>
</dbReference>
<dbReference type="KEGG" id="mta:Moth_1124"/>
<dbReference type="PATRIC" id="fig|264732.11.peg.1206"/>
<dbReference type="eggNOG" id="COG0648">
    <property type="taxonomic scope" value="Bacteria"/>
</dbReference>
<dbReference type="HOGENOM" id="CLU_025885_0_1_9"/>
<dbReference type="OrthoDB" id="9805666at2"/>
<dbReference type="GO" id="GO:0008833">
    <property type="term" value="F:deoxyribonuclease IV (phage-T4-induced) activity"/>
    <property type="evidence" value="ECO:0007669"/>
    <property type="project" value="UniProtKB-UniRule"/>
</dbReference>
<dbReference type="GO" id="GO:0003677">
    <property type="term" value="F:DNA binding"/>
    <property type="evidence" value="ECO:0007669"/>
    <property type="project" value="InterPro"/>
</dbReference>
<dbReference type="GO" id="GO:0003906">
    <property type="term" value="F:DNA-(apurinic or apyrimidinic site) endonuclease activity"/>
    <property type="evidence" value="ECO:0007669"/>
    <property type="project" value="TreeGrafter"/>
</dbReference>
<dbReference type="GO" id="GO:0008081">
    <property type="term" value="F:phosphoric diester hydrolase activity"/>
    <property type="evidence" value="ECO:0007669"/>
    <property type="project" value="TreeGrafter"/>
</dbReference>
<dbReference type="GO" id="GO:0008270">
    <property type="term" value="F:zinc ion binding"/>
    <property type="evidence" value="ECO:0007669"/>
    <property type="project" value="UniProtKB-UniRule"/>
</dbReference>
<dbReference type="GO" id="GO:0006284">
    <property type="term" value="P:base-excision repair"/>
    <property type="evidence" value="ECO:0007669"/>
    <property type="project" value="TreeGrafter"/>
</dbReference>
<dbReference type="CDD" id="cd00019">
    <property type="entry name" value="AP2Ec"/>
    <property type="match status" value="1"/>
</dbReference>
<dbReference type="Gene3D" id="3.20.20.150">
    <property type="entry name" value="Divalent-metal-dependent TIM barrel enzymes"/>
    <property type="match status" value="1"/>
</dbReference>
<dbReference type="HAMAP" id="MF_00152">
    <property type="entry name" value="Nfo"/>
    <property type="match status" value="1"/>
</dbReference>
<dbReference type="InterPro" id="IPR001719">
    <property type="entry name" value="AP_endonuc_2"/>
</dbReference>
<dbReference type="InterPro" id="IPR018246">
    <property type="entry name" value="AP_endonuc_F2_Zn_BS"/>
</dbReference>
<dbReference type="InterPro" id="IPR036237">
    <property type="entry name" value="Xyl_isomerase-like_sf"/>
</dbReference>
<dbReference type="InterPro" id="IPR013022">
    <property type="entry name" value="Xyl_isomerase-like_TIM-brl"/>
</dbReference>
<dbReference type="NCBIfam" id="TIGR00587">
    <property type="entry name" value="nfo"/>
    <property type="match status" value="1"/>
</dbReference>
<dbReference type="PANTHER" id="PTHR21445:SF0">
    <property type="entry name" value="APURINIC-APYRIMIDINIC ENDONUCLEASE"/>
    <property type="match status" value="1"/>
</dbReference>
<dbReference type="PANTHER" id="PTHR21445">
    <property type="entry name" value="ENDONUCLEASE IV ENDODEOXYRIBONUCLEASE IV"/>
    <property type="match status" value="1"/>
</dbReference>
<dbReference type="Pfam" id="PF01261">
    <property type="entry name" value="AP_endonuc_2"/>
    <property type="match status" value="1"/>
</dbReference>
<dbReference type="SMART" id="SM00518">
    <property type="entry name" value="AP2Ec"/>
    <property type="match status" value="1"/>
</dbReference>
<dbReference type="SUPFAM" id="SSF51658">
    <property type="entry name" value="Xylose isomerase-like"/>
    <property type="match status" value="1"/>
</dbReference>
<dbReference type="PROSITE" id="PS00731">
    <property type="entry name" value="AP_NUCLEASE_F2_3"/>
    <property type="match status" value="1"/>
</dbReference>
<dbReference type="PROSITE" id="PS51432">
    <property type="entry name" value="AP_NUCLEASE_F2_4"/>
    <property type="match status" value="1"/>
</dbReference>
<name>END4_MOOTA</name>
<proteinExistence type="inferred from homology"/>
<reference key="1">
    <citation type="journal article" date="2008" name="Environ. Microbiol.">
        <title>The complete genome sequence of Moorella thermoacetica (f. Clostridium thermoaceticum).</title>
        <authorList>
            <person name="Pierce E."/>
            <person name="Xie G."/>
            <person name="Barabote R.D."/>
            <person name="Saunders E."/>
            <person name="Han C.S."/>
            <person name="Detter J.C."/>
            <person name="Richardson P."/>
            <person name="Brettin T.S."/>
            <person name="Das A."/>
            <person name="Ljungdahl L.G."/>
            <person name="Ragsdale S.W."/>
        </authorList>
    </citation>
    <scope>NUCLEOTIDE SEQUENCE [LARGE SCALE GENOMIC DNA]</scope>
    <source>
        <strain>ATCC 39073 / JCM 9320</strain>
    </source>
</reference>
<gene>
    <name evidence="1" type="primary">nfo</name>
    <name type="ordered locus">Moth_1124</name>
</gene>